<proteinExistence type="inferred from homology"/>
<evidence type="ECO:0000250" key="1"/>
<evidence type="ECO:0000250" key="2">
    <source>
        <dbReference type="UniProtKB" id="Q9NYG5"/>
    </source>
</evidence>
<evidence type="ECO:0000255" key="3">
    <source>
        <dbReference type="PROSITE-ProRule" id="PRU00175"/>
    </source>
</evidence>
<evidence type="ECO:0000305" key="4"/>
<keyword id="KW-0131">Cell cycle</keyword>
<keyword id="KW-0132">Cell division</keyword>
<keyword id="KW-0963">Cytoplasm</keyword>
<keyword id="KW-0479">Metal-binding</keyword>
<keyword id="KW-0498">Mitosis</keyword>
<keyword id="KW-0539">Nucleus</keyword>
<keyword id="KW-1185">Reference proteome</keyword>
<keyword id="KW-0832">Ubl conjugation</keyword>
<keyword id="KW-0833">Ubl conjugation pathway</keyword>
<keyword id="KW-0862">Zinc</keyword>
<keyword id="KW-0863">Zinc-finger</keyword>
<reference key="1">
    <citation type="journal article" date="2005" name="Science">
        <title>The transcriptional landscape of the mammalian genome.</title>
        <authorList>
            <person name="Carninci P."/>
            <person name="Kasukawa T."/>
            <person name="Katayama S."/>
            <person name="Gough J."/>
            <person name="Frith M.C."/>
            <person name="Maeda N."/>
            <person name="Oyama R."/>
            <person name="Ravasi T."/>
            <person name="Lenhard B."/>
            <person name="Wells C."/>
            <person name="Kodzius R."/>
            <person name="Shimokawa K."/>
            <person name="Bajic V.B."/>
            <person name="Brenner S.E."/>
            <person name="Batalov S."/>
            <person name="Forrest A.R."/>
            <person name="Zavolan M."/>
            <person name="Davis M.J."/>
            <person name="Wilming L.G."/>
            <person name="Aidinis V."/>
            <person name="Allen J.E."/>
            <person name="Ambesi-Impiombato A."/>
            <person name="Apweiler R."/>
            <person name="Aturaliya R.N."/>
            <person name="Bailey T.L."/>
            <person name="Bansal M."/>
            <person name="Baxter L."/>
            <person name="Beisel K.W."/>
            <person name="Bersano T."/>
            <person name="Bono H."/>
            <person name="Chalk A.M."/>
            <person name="Chiu K.P."/>
            <person name="Choudhary V."/>
            <person name="Christoffels A."/>
            <person name="Clutterbuck D.R."/>
            <person name="Crowe M.L."/>
            <person name="Dalla E."/>
            <person name="Dalrymple B.P."/>
            <person name="de Bono B."/>
            <person name="Della Gatta G."/>
            <person name="di Bernardo D."/>
            <person name="Down T."/>
            <person name="Engstrom P."/>
            <person name="Fagiolini M."/>
            <person name="Faulkner G."/>
            <person name="Fletcher C.F."/>
            <person name="Fukushima T."/>
            <person name="Furuno M."/>
            <person name="Futaki S."/>
            <person name="Gariboldi M."/>
            <person name="Georgii-Hemming P."/>
            <person name="Gingeras T.R."/>
            <person name="Gojobori T."/>
            <person name="Green R.E."/>
            <person name="Gustincich S."/>
            <person name="Harbers M."/>
            <person name="Hayashi Y."/>
            <person name="Hensch T.K."/>
            <person name="Hirokawa N."/>
            <person name="Hill D."/>
            <person name="Huminiecki L."/>
            <person name="Iacono M."/>
            <person name="Ikeo K."/>
            <person name="Iwama A."/>
            <person name="Ishikawa T."/>
            <person name="Jakt M."/>
            <person name="Kanapin A."/>
            <person name="Katoh M."/>
            <person name="Kawasawa Y."/>
            <person name="Kelso J."/>
            <person name="Kitamura H."/>
            <person name="Kitano H."/>
            <person name="Kollias G."/>
            <person name="Krishnan S.P."/>
            <person name="Kruger A."/>
            <person name="Kummerfeld S.K."/>
            <person name="Kurochkin I.V."/>
            <person name="Lareau L.F."/>
            <person name="Lazarevic D."/>
            <person name="Lipovich L."/>
            <person name="Liu J."/>
            <person name="Liuni S."/>
            <person name="McWilliam S."/>
            <person name="Madan Babu M."/>
            <person name="Madera M."/>
            <person name="Marchionni L."/>
            <person name="Matsuda H."/>
            <person name="Matsuzawa S."/>
            <person name="Miki H."/>
            <person name="Mignone F."/>
            <person name="Miyake S."/>
            <person name="Morris K."/>
            <person name="Mottagui-Tabar S."/>
            <person name="Mulder N."/>
            <person name="Nakano N."/>
            <person name="Nakauchi H."/>
            <person name="Ng P."/>
            <person name="Nilsson R."/>
            <person name="Nishiguchi S."/>
            <person name="Nishikawa S."/>
            <person name="Nori F."/>
            <person name="Ohara O."/>
            <person name="Okazaki Y."/>
            <person name="Orlando V."/>
            <person name="Pang K.C."/>
            <person name="Pavan W.J."/>
            <person name="Pavesi G."/>
            <person name="Pesole G."/>
            <person name="Petrovsky N."/>
            <person name="Piazza S."/>
            <person name="Reed J."/>
            <person name="Reid J.F."/>
            <person name="Ring B.Z."/>
            <person name="Ringwald M."/>
            <person name="Rost B."/>
            <person name="Ruan Y."/>
            <person name="Salzberg S.L."/>
            <person name="Sandelin A."/>
            <person name="Schneider C."/>
            <person name="Schoenbach C."/>
            <person name="Sekiguchi K."/>
            <person name="Semple C.A."/>
            <person name="Seno S."/>
            <person name="Sessa L."/>
            <person name="Sheng Y."/>
            <person name="Shibata Y."/>
            <person name="Shimada H."/>
            <person name="Shimada K."/>
            <person name="Silva D."/>
            <person name="Sinclair B."/>
            <person name="Sperling S."/>
            <person name="Stupka E."/>
            <person name="Sugiura K."/>
            <person name="Sultana R."/>
            <person name="Takenaka Y."/>
            <person name="Taki K."/>
            <person name="Tammoja K."/>
            <person name="Tan S.L."/>
            <person name="Tang S."/>
            <person name="Taylor M.S."/>
            <person name="Tegner J."/>
            <person name="Teichmann S.A."/>
            <person name="Ueda H.R."/>
            <person name="van Nimwegen E."/>
            <person name="Verardo R."/>
            <person name="Wei C.L."/>
            <person name="Yagi K."/>
            <person name="Yamanishi H."/>
            <person name="Zabarovsky E."/>
            <person name="Zhu S."/>
            <person name="Zimmer A."/>
            <person name="Hide W."/>
            <person name="Bult C."/>
            <person name="Grimmond S.M."/>
            <person name="Teasdale R.D."/>
            <person name="Liu E.T."/>
            <person name="Brusic V."/>
            <person name="Quackenbush J."/>
            <person name="Wahlestedt C."/>
            <person name="Mattick J.S."/>
            <person name="Hume D.A."/>
            <person name="Kai C."/>
            <person name="Sasaki D."/>
            <person name="Tomaru Y."/>
            <person name="Fukuda S."/>
            <person name="Kanamori-Katayama M."/>
            <person name="Suzuki M."/>
            <person name="Aoki J."/>
            <person name="Arakawa T."/>
            <person name="Iida J."/>
            <person name="Imamura K."/>
            <person name="Itoh M."/>
            <person name="Kato T."/>
            <person name="Kawaji H."/>
            <person name="Kawagashira N."/>
            <person name="Kawashima T."/>
            <person name="Kojima M."/>
            <person name="Kondo S."/>
            <person name="Konno H."/>
            <person name="Nakano K."/>
            <person name="Ninomiya N."/>
            <person name="Nishio T."/>
            <person name="Okada M."/>
            <person name="Plessy C."/>
            <person name="Shibata K."/>
            <person name="Shiraki T."/>
            <person name="Suzuki S."/>
            <person name="Tagami M."/>
            <person name="Waki K."/>
            <person name="Watahiki A."/>
            <person name="Okamura-Oho Y."/>
            <person name="Suzuki H."/>
            <person name="Kawai J."/>
            <person name="Hayashizaki Y."/>
        </authorList>
    </citation>
    <scope>NUCLEOTIDE SEQUENCE [LARGE SCALE MRNA]</scope>
    <source>
        <strain>C57BL/6J</strain>
        <tissue>Corpora quadrigemina</tissue>
        <tissue>Embryo</tissue>
    </source>
</reference>
<reference key="2">
    <citation type="journal article" date="2004" name="Genome Res.">
        <title>The status, quality, and expansion of the NIH full-length cDNA project: the Mammalian Gene Collection (MGC).</title>
        <authorList>
            <consortium name="The MGC Project Team"/>
        </authorList>
    </citation>
    <scope>NUCLEOTIDE SEQUENCE [LARGE SCALE MRNA]</scope>
    <source>
        <strain>FVB/N</strain>
        <tissue>Mammary tumor</tissue>
    </source>
</reference>
<protein>
    <recommendedName>
        <fullName>Anaphase-promoting complex subunit 11</fullName>
        <shortName>APC11</shortName>
    </recommendedName>
    <alternativeName>
        <fullName>Cyclosome subunit 11</fullName>
    </alternativeName>
</protein>
<accession>Q9CPX9</accession>
<accession>Q3UWH1</accession>
<accession>Q9CTG0</accession>
<feature type="chain" id="PRO_0000055748" description="Anaphase-promoting complex subunit 11">
    <location>
        <begin position="1"/>
        <end position="84"/>
    </location>
</feature>
<feature type="zinc finger region" description="RING-type" evidence="3">
    <location>
        <begin position="34"/>
        <end position="77"/>
    </location>
</feature>
<feature type="binding site" evidence="1">
    <location>
        <position position="23"/>
    </location>
    <ligand>
        <name>Zn(2+)</name>
        <dbReference type="ChEBI" id="CHEBI:29105"/>
        <label>1</label>
    </ligand>
</feature>
<feature type="binding site" evidence="1">
    <location>
        <position position="26"/>
    </location>
    <ligand>
        <name>Zn(2+)</name>
        <dbReference type="ChEBI" id="CHEBI:29105"/>
        <label>1</label>
    </ligand>
</feature>
<feature type="binding site" evidence="1">
    <location>
        <position position="34"/>
    </location>
    <ligand>
        <name>Zn(2+)</name>
        <dbReference type="ChEBI" id="CHEBI:29105"/>
        <label>3</label>
    </ligand>
</feature>
<feature type="binding site" evidence="1">
    <location>
        <position position="37"/>
    </location>
    <ligand>
        <name>Zn(2+)</name>
        <dbReference type="ChEBI" id="CHEBI:29105"/>
        <label>3</label>
    </ligand>
</feature>
<feature type="binding site" evidence="1">
    <location>
        <position position="44"/>
    </location>
    <ligand>
        <name>Zn(2+)</name>
        <dbReference type="ChEBI" id="CHEBI:29105"/>
        <label>3</label>
    </ligand>
</feature>
<feature type="binding site" evidence="1">
    <location>
        <position position="51"/>
    </location>
    <ligand>
        <name>Zn(2+)</name>
        <dbReference type="ChEBI" id="CHEBI:29105"/>
        <label>2</label>
    </ligand>
</feature>
<feature type="binding site" evidence="1">
    <location>
        <position position="53"/>
    </location>
    <ligand>
        <name>Zn(2+)</name>
        <dbReference type="ChEBI" id="CHEBI:29105"/>
        <label>2</label>
    </ligand>
</feature>
<feature type="binding site" evidence="1">
    <location>
        <position position="56"/>
    </location>
    <ligand>
        <name>Zn(2+)</name>
        <dbReference type="ChEBI" id="CHEBI:29105"/>
        <label>1</label>
    </ligand>
</feature>
<feature type="binding site" evidence="1">
    <location>
        <position position="58"/>
    </location>
    <ligand>
        <name>Zn(2+)</name>
        <dbReference type="ChEBI" id="CHEBI:29105"/>
        <label>3</label>
    </ligand>
</feature>
<feature type="binding site" evidence="1">
    <location>
        <position position="59"/>
    </location>
    <ligand>
        <name>Zn(2+)</name>
        <dbReference type="ChEBI" id="CHEBI:29105"/>
        <label>1</label>
    </ligand>
</feature>
<feature type="binding site" evidence="1">
    <location>
        <position position="73"/>
    </location>
    <ligand>
        <name>Zn(2+)</name>
        <dbReference type="ChEBI" id="CHEBI:29105"/>
        <label>2</label>
    </ligand>
</feature>
<feature type="binding site" evidence="1">
    <location>
        <position position="76"/>
    </location>
    <ligand>
        <name>Zn(2+)</name>
        <dbReference type="ChEBI" id="CHEBI:29105"/>
        <label>2</label>
    </ligand>
</feature>
<dbReference type="EMBL" id="AK003244">
    <property type="protein sequence ID" value="BAB22663.1"/>
    <property type="molecule type" value="mRNA"/>
</dbReference>
<dbReference type="EMBL" id="AK003612">
    <property type="protein sequence ID" value="BAB22890.1"/>
    <property type="molecule type" value="mRNA"/>
</dbReference>
<dbReference type="EMBL" id="AK003684">
    <property type="protein sequence ID" value="BAB22937.1"/>
    <property type="molecule type" value="mRNA"/>
</dbReference>
<dbReference type="EMBL" id="AK045408">
    <property type="protein sequence ID" value="BAC32348.1"/>
    <property type="molecule type" value="mRNA"/>
</dbReference>
<dbReference type="EMBL" id="AK136358">
    <property type="protein sequence ID" value="BAE22944.1"/>
    <property type="molecule type" value="mRNA"/>
</dbReference>
<dbReference type="EMBL" id="BC023039">
    <property type="protein sequence ID" value="AAH23039.1"/>
    <property type="molecule type" value="mRNA"/>
</dbReference>
<dbReference type="CCDS" id="CCDS25745.1"/>
<dbReference type="RefSeq" id="NP_001033319.1">
    <property type="nucleotide sequence ID" value="NM_001038230.2"/>
</dbReference>
<dbReference type="RefSeq" id="NP_079665.1">
    <property type="nucleotide sequence ID" value="NM_025389.4"/>
</dbReference>
<dbReference type="BMRB" id="Q9CPX9"/>
<dbReference type="SMR" id="Q9CPX9"/>
<dbReference type="BioGRID" id="211257">
    <property type="interactions" value="3"/>
</dbReference>
<dbReference type="FunCoup" id="Q9CPX9">
    <property type="interactions" value="1938"/>
</dbReference>
<dbReference type="STRING" id="10090.ENSMUSP00000026128"/>
<dbReference type="iPTMnet" id="Q9CPX9"/>
<dbReference type="PhosphoSitePlus" id="Q9CPX9"/>
<dbReference type="PaxDb" id="10090-ENSMUSP00000097714"/>
<dbReference type="PeptideAtlas" id="Q9CPX9"/>
<dbReference type="ProteomicsDB" id="281793"/>
<dbReference type="DNASU" id="66156"/>
<dbReference type="Ensembl" id="ENSMUST00000026128.10">
    <property type="protein sequence ID" value="ENSMUSP00000026128.4"/>
    <property type="gene ID" value="ENSMUSG00000025135.13"/>
</dbReference>
<dbReference type="Ensembl" id="ENSMUST00000093140.5">
    <property type="protein sequence ID" value="ENSMUSP00000097714.4"/>
    <property type="gene ID" value="ENSMUSG00000025135.13"/>
</dbReference>
<dbReference type="GeneID" id="66156"/>
<dbReference type="KEGG" id="mmu:66156"/>
<dbReference type="UCSC" id="uc007mtm.2">
    <property type="organism name" value="mouse"/>
</dbReference>
<dbReference type="AGR" id="MGI:1913406"/>
<dbReference type="CTD" id="51529"/>
<dbReference type="MGI" id="MGI:1913406">
    <property type="gene designation" value="Anapc11"/>
</dbReference>
<dbReference type="VEuPathDB" id="HostDB:ENSMUSG00000025135"/>
<dbReference type="eggNOG" id="KOG1493">
    <property type="taxonomic scope" value="Eukaryota"/>
</dbReference>
<dbReference type="GeneTree" id="ENSGT00550000075186"/>
<dbReference type="HOGENOM" id="CLU_115512_0_2_1"/>
<dbReference type="InParanoid" id="Q9CPX9"/>
<dbReference type="OMA" id="QWRWDTG"/>
<dbReference type="OrthoDB" id="1681166at2759"/>
<dbReference type="PhylomeDB" id="Q9CPX9"/>
<dbReference type="TreeFam" id="TF354219"/>
<dbReference type="Reactome" id="R-MMU-141430">
    <property type="pathway name" value="Inactivation of APC/C via direct inhibition of the APC/C complex"/>
</dbReference>
<dbReference type="Reactome" id="R-MMU-174048">
    <property type="pathway name" value="APC/C:Cdc20 mediated degradation of Cyclin B"/>
</dbReference>
<dbReference type="Reactome" id="R-MMU-174084">
    <property type="pathway name" value="Autodegradation of Cdh1 by Cdh1:APC/C"/>
</dbReference>
<dbReference type="Reactome" id="R-MMU-174154">
    <property type="pathway name" value="APC/C:Cdc20 mediated degradation of Securin"/>
</dbReference>
<dbReference type="Reactome" id="R-MMU-174178">
    <property type="pathway name" value="APC/C:Cdh1 mediated degradation of Cdc20 and other APC/C:Cdh1 targeted proteins in late mitosis/early G1"/>
</dbReference>
<dbReference type="Reactome" id="R-MMU-174184">
    <property type="pathway name" value="Cdc20:Phospho-APC/C mediated degradation of Cyclin A"/>
</dbReference>
<dbReference type="Reactome" id="R-MMU-176407">
    <property type="pathway name" value="Conversion from APC/C:Cdc20 to APC/C:Cdh1 in late anaphase"/>
</dbReference>
<dbReference type="Reactome" id="R-MMU-176408">
    <property type="pathway name" value="Regulation of APC/C activators between G1/S and early anaphase"/>
</dbReference>
<dbReference type="Reactome" id="R-MMU-176409">
    <property type="pathway name" value="APC/C:Cdc20 mediated degradation of mitotic proteins"/>
</dbReference>
<dbReference type="Reactome" id="R-MMU-176412">
    <property type="pathway name" value="Phosphorylation of the APC/C"/>
</dbReference>
<dbReference type="Reactome" id="R-MMU-179409">
    <property type="pathway name" value="APC-Cdc20 mediated degradation of Nek2A"/>
</dbReference>
<dbReference type="Reactome" id="R-MMU-2467813">
    <property type="pathway name" value="Separation of Sister Chromatids"/>
</dbReference>
<dbReference type="Reactome" id="R-MMU-2559582">
    <property type="pathway name" value="Senescence-Associated Secretory Phenotype (SASP)"/>
</dbReference>
<dbReference type="Reactome" id="R-MMU-68867">
    <property type="pathway name" value="Assembly of the pre-replicative complex"/>
</dbReference>
<dbReference type="Reactome" id="R-MMU-69017">
    <property type="pathway name" value="CDK-mediated phosphorylation and removal of Cdc6"/>
</dbReference>
<dbReference type="Reactome" id="R-MMU-983168">
    <property type="pathway name" value="Antigen processing: Ubiquitination &amp; Proteasome degradation"/>
</dbReference>
<dbReference type="UniPathway" id="UPA00143"/>
<dbReference type="BioGRID-ORCS" id="66156">
    <property type="hits" value="28 hits in 77 CRISPR screens"/>
</dbReference>
<dbReference type="ChiTaRS" id="Anapc11">
    <property type="organism name" value="mouse"/>
</dbReference>
<dbReference type="PRO" id="PR:Q9CPX9"/>
<dbReference type="Proteomes" id="UP000000589">
    <property type="component" value="Chromosome 11"/>
</dbReference>
<dbReference type="RNAct" id="Q9CPX9">
    <property type="molecule type" value="protein"/>
</dbReference>
<dbReference type="Bgee" id="ENSMUSG00000025135">
    <property type="expression patterns" value="Expressed in cardiac atrium and 278 other cell types or tissues"/>
</dbReference>
<dbReference type="GO" id="GO:0005680">
    <property type="term" value="C:anaphase-promoting complex"/>
    <property type="evidence" value="ECO:0000250"/>
    <property type="project" value="UniProtKB"/>
</dbReference>
<dbReference type="GO" id="GO:0005737">
    <property type="term" value="C:cytoplasm"/>
    <property type="evidence" value="ECO:0007669"/>
    <property type="project" value="UniProtKB-SubCell"/>
</dbReference>
<dbReference type="GO" id="GO:0005730">
    <property type="term" value="C:nucleolus"/>
    <property type="evidence" value="ECO:0007669"/>
    <property type="project" value="Ensembl"/>
</dbReference>
<dbReference type="GO" id="GO:0005654">
    <property type="term" value="C:nucleoplasm"/>
    <property type="evidence" value="ECO:0007669"/>
    <property type="project" value="Ensembl"/>
</dbReference>
<dbReference type="GO" id="GO:0097602">
    <property type="term" value="F:cullin family protein binding"/>
    <property type="evidence" value="ECO:0000266"/>
    <property type="project" value="MGI"/>
</dbReference>
<dbReference type="GO" id="GO:0001664">
    <property type="term" value="F:G protein-coupled receptor binding"/>
    <property type="evidence" value="ECO:0007669"/>
    <property type="project" value="Ensembl"/>
</dbReference>
<dbReference type="GO" id="GO:0061630">
    <property type="term" value="F:ubiquitin protein ligase activity"/>
    <property type="evidence" value="ECO:0000266"/>
    <property type="project" value="MGI"/>
</dbReference>
<dbReference type="GO" id="GO:0034450">
    <property type="term" value="F:ubiquitin-ubiquitin ligase activity"/>
    <property type="evidence" value="ECO:0000266"/>
    <property type="project" value="MGI"/>
</dbReference>
<dbReference type="GO" id="GO:0008270">
    <property type="term" value="F:zinc ion binding"/>
    <property type="evidence" value="ECO:0007669"/>
    <property type="project" value="UniProtKB-KW"/>
</dbReference>
<dbReference type="GO" id="GO:0031145">
    <property type="term" value="P:anaphase-promoting complex-dependent catabolic process"/>
    <property type="evidence" value="ECO:0000250"/>
    <property type="project" value="UniProtKB"/>
</dbReference>
<dbReference type="GO" id="GO:0051301">
    <property type="term" value="P:cell division"/>
    <property type="evidence" value="ECO:0007669"/>
    <property type="project" value="UniProtKB-KW"/>
</dbReference>
<dbReference type="GO" id="GO:0045842">
    <property type="term" value="P:positive regulation of mitotic metaphase/anaphase transition"/>
    <property type="evidence" value="ECO:0007669"/>
    <property type="project" value="Ensembl"/>
</dbReference>
<dbReference type="GO" id="GO:0141198">
    <property type="term" value="P:protein branched polyubiquitination"/>
    <property type="evidence" value="ECO:0000250"/>
    <property type="project" value="UniProtKB"/>
</dbReference>
<dbReference type="GO" id="GO:0070979">
    <property type="term" value="P:protein K11-linked ubiquitination"/>
    <property type="evidence" value="ECO:0000250"/>
    <property type="project" value="UniProtKB"/>
</dbReference>
<dbReference type="GO" id="GO:0070936">
    <property type="term" value="P:protein K48-linked ubiquitination"/>
    <property type="evidence" value="ECO:0000250"/>
    <property type="project" value="UniProtKB"/>
</dbReference>
<dbReference type="CDD" id="cd16456">
    <property type="entry name" value="RING-H2_APC11"/>
    <property type="match status" value="1"/>
</dbReference>
<dbReference type="FunFam" id="3.30.40.10:FF:000111">
    <property type="entry name" value="Anaphase-promoting complex subunit 11"/>
    <property type="match status" value="1"/>
</dbReference>
<dbReference type="Gene3D" id="3.30.40.10">
    <property type="entry name" value="Zinc/RING finger domain, C3HC4 (zinc finger)"/>
    <property type="match status" value="1"/>
</dbReference>
<dbReference type="InterPro" id="IPR051031">
    <property type="entry name" value="RING-box_E3_Ubiquitin_Ligase"/>
</dbReference>
<dbReference type="InterPro" id="IPR024991">
    <property type="entry name" value="RING-H2_APC11"/>
</dbReference>
<dbReference type="InterPro" id="IPR001841">
    <property type="entry name" value="Znf_RING"/>
</dbReference>
<dbReference type="InterPro" id="IPR013083">
    <property type="entry name" value="Znf_RING/FYVE/PHD"/>
</dbReference>
<dbReference type="PANTHER" id="PTHR11210">
    <property type="entry name" value="RING BOX"/>
    <property type="match status" value="1"/>
</dbReference>
<dbReference type="Pfam" id="PF12861">
    <property type="entry name" value="zf-ANAPC11"/>
    <property type="match status" value="1"/>
</dbReference>
<dbReference type="SUPFAM" id="SSF57850">
    <property type="entry name" value="RING/U-box"/>
    <property type="match status" value="1"/>
</dbReference>
<dbReference type="PROSITE" id="PS50089">
    <property type="entry name" value="ZF_RING_2"/>
    <property type="match status" value="1"/>
</dbReference>
<name>APC11_MOUSE</name>
<comment type="function">
    <text evidence="2">Together with the cullin protein ANAPC2, constitutes the catalytic component of the anaphase promoting complex/cyclosome (APC/C), a cell cycle-regulated E3 ubiquitin ligase that controls progression through mitosis and the G1 phase of the cell cycle. The APC/C complex acts by mediating ubiquitination and subsequent degradation of target proteins: it mainly mediates the formation of 'Lys-11'-linked polyubiquitin chains and, to a lower extent, the formation of 'Lys-48'- and 'Lys-63'-linked polyubiquitin chains. The APC/C complex catalyzes assembly of branched 'Lys-11'-/'Lys-48'-linked branched ubiquitin chains on target proteins. May recruit the E2 ubiquitin-conjugating enzymes to the complex.</text>
</comment>
<comment type="pathway">
    <text evidence="2">Protein modification; protein ubiquitination.</text>
</comment>
<comment type="subunit">
    <text evidence="2">The mammalian APC/C is composed at least of 14 distinct subunits ANAPC1, ANAPC2, CDC27/APC3, ANAPC4, ANAPC5, CDC16/APC6, ANAPC7, CDC23/APC8, ANAPC10, ANAPC11, CDC26/APC12, ANAPC13, ANAPC15 and ANAPC16 that assemble into a complex of at least 19 chains with a combined molecular mass of around 1.2 MDa; APC/C interacts with FZR1 and FBXO5. Interacts with the cullin domain of ANAPC2. Interacts with UBE2D2.</text>
</comment>
<comment type="subcellular location">
    <subcellularLocation>
        <location evidence="1">Cytoplasm</location>
    </subcellularLocation>
    <subcellularLocation>
        <location evidence="1">Nucleus</location>
    </subcellularLocation>
</comment>
<comment type="domain">
    <text evidence="1">The RING-type zinc finger domain coordinates an additional third zinc ion.</text>
</comment>
<comment type="PTM">
    <text evidence="1">Auto-ubiquitinated.</text>
</comment>
<comment type="similarity">
    <text evidence="4">Belongs to the RING-box family.</text>
</comment>
<gene>
    <name type="primary">Anapc11</name>
</gene>
<sequence>MKVKIKCWNGVATWLWVANDENCGICRMAFNGCCPDCKVPGDDCPLVWGQCSHCFHMHCILKWLNAQQVQQHCPMCRQEWKFKE</sequence>
<organism>
    <name type="scientific">Mus musculus</name>
    <name type="common">Mouse</name>
    <dbReference type="NCBI Taxonomy" id="10090"/>
    <lineage>
        <taxon>Eukaryota</taxon>
        <taxon>Metazoa</taxon>
        <taxon>Chordata</taxon>
        <taxon>Craniata</taxon>
        <taxon>Vertebrata</taxon>
        <taxon>Euteleostomi</taxon>
        <taxon>Mammalia</taxon>
        <taxon>Eutheria</taxon>
        <taxon>Euarchontoglires</taxon>
        <taxon>Glires</taxon>
        <taxon>Rodentia</taxon>
        <taxon>Myomorpha</taxon>
        <taxon>Muroidea</taxon>
        <taxon>Muridae</taxon>
        <taxon>Murinae</taxon>
        <taxon>Mus</taxon>
        <taxon>Mus</taxon>
    </lineage>
</organism>